<evidence type="ECO:0000255" key="1">
    <source>
        <dbReference type="HAMAP-Rule" id="MF_01807"/>
    </source>
</evidence>
<evidence type="ECO:0000255" key="2">
    <source>
        <dbReference type="PROSITE-ProRule" id="PRU01246"/>
    </source>
</evidence>
<evidence type="ECO:0000255" key="3">
    <source>
        <dbReference type="PROSITE-ProRule" id="PRU01248"/>
    </source>
</evidence>
<feature type="chain" id="PRO_0000095404" description="Tyrosine recombinase XerD">
    <location>
        <begin position="1"/>
        <end position="313"/>
    </location>
</feature>
<feature type="domain" description="Core-binding (CB)" evidence="3">
    <location>
        <begin position="17"/>
        <end position="102"/>
    </location>
</feature>
<feature type="domain" description="Tyr recombinase" evidence="2">
    <location>
        <begin position="123"/>
        <end position="307"/>
    </location>
</feature>
<feature type="active site" evidence="1">
    <location>
        <position position="163"/>
    </location>
</feature>
<feature type="active site" evidence="1">
    <location>
        <position position="187"/>
    </location>
</feature>
<feature type="active site" evidence="1">
    <location>
        <position position="259"/>
    </location>
</feature>
<feature type="active site" evidence="1">
    <location>
        <position position="262"/>
    </location>
</feature>
<feature type="active site" evidence="1">
    <location>
        <position position="285"/>
    </location>
</feature>
<feature type="active site" description="O-(3'-phospho-DNA)-tyrosine intermediate" evidence="1">
    <location>
        <position position="294"/>
    </location>
</feature>
<proteinExistence type="evidence at protein level"/>
<protein>
    <recommendedName>
        <fullName evidence="1">Tyrosine recombinase XerD</fullName>
    </recommendedName>
</protein>
<comment type="function">
    <text evidence="1">Site-specific tyrosine recombinase, which acts by catalyzing the cutting and rejoining of the recombining DNA molecules. Binds cooperatively to specific DNA consensus sequences that are separated from XerC binding sites by a short central region, forming the heterotetrameric XerC-XerD complex that recombines DNA substrates. The complex is essential to convert dimers of the bacterial chromosome into monomers to permit their segregation at cell division. It also contributes to the segregational stability of plasmids. In the complex XerD specifically exchanges the bottom DNA strands.</text>
</comment>
<comment type="activity regulation">
    <text evidence="1">FtsK may regulate the catalytic switch between XerC and XerD in the heterotetrameric complex during the two steps of the recombination process.</text>
</comment>
<comment type="subunit">
    <text evidence="1">Forms a cyclic heterotetrameric complex composed of two molecules of XerC and two molecules of XerD, in which XerC interacts with XerD via its C-terminal region, XerD interacts with XerC via its C-terminal region and so on.</text>
</comment>
<comment type="subcellular location">
    <subcellularLocation>
        <location evidence="1">Cytoplasm</location>
    </subcellularLocation>
</comment>
<comment type="similarity">
    <text evidence="1">Belongs to the 'phage' integrase family. XerD subfamily.</text>
</comment>
<dbReference type="EMBL" id="AF033497">
    <property type="protein sequence ID" value="AAB87499.1"/>
    <property type="molecule type" value="Genomic_DNA"/>
</dbReference>
<dbReference type="RefSeq" id="WP_004244032.1">
    <property type="nucleotide sequence ID" value="NZ_WURR01000002.1"/>
</dbReference>
<dbReference type="SMR" id="O31206"/>
<dbReference type="STRING" id="584.AOUC001_04720"/>
<dbReference type="GeneID" id="6803432"/>
<dbReference type="PATRIC" id="fig|584.106.peg.2483"/>
<dbReference type="OMA" id="FWYLIKR"/>
<dbReference type="GO" id="GO:0005737">
    <property type="term" value="C:cytoplasm"/>
    <property type="evidence" value="ECO:0007669"/>
    <property type="project" value="UniProtKB-SubCell"/>
</dbReference>
<dbReference type="GO" id="GO:0003677">
    <property type="term" value="F:DNA binding"/>
    <property type="evidence" value="ECO:0007669"/>
    <property type="project" value="UniProtKB-KW"/>
</dbReference>
<dbReference type="GO" id="GO:0009037">
    <property type="term" value="F:tyrosine-based site-specific recombinase activity"/>
    <property type="evidence" value="ECO:0007669"/>
    <property type="project" value="UniProtKB-UniRule"/>
</dbReference>
<dbReference type="GO" id="GO:0051301">
    <property type="term" value="P:cell division"/>
    <property type="evidence" value="ECO:0007669"/>
    <property type="project" value="UniProtKB-KW"/>
</dbReference>
<dbReference type="GO" id="GO:0007059">
    <property type="term" value="P:chromosome segregation"/>
    <property type="evidence" value="ECO:0007669"/>
    <property type="project" value="UniProtKB-UniRule"/>
</dbReference>
<dbReference type="GO" id="GO:0006313">
    <property type="term" value="P:DNA transposition"/>
    <property type="evidence" value="ECO:0007669"/>
    <property type="project" value="UniProtKB-UniRule"/>
</dbReference>
<dbReference type="CDD" id="cd00798">
    <property type="entry name" value="INT_XerDC_C"/>
    <property type="match status" value="1"/>
</dbReference>
<dbReference type="FunFam" id="1.10.443.10:FF:000001">
    <property type="entry name" value="Tyrosine recombinase XerD"/>
    <property type="match status" value="1"/>
</dbReference>
<dbReference type="Gene3D" id="1.10.150.130">
    <property type="match status" value="1"/>
</dbReference>
<dbReference type="Gene3D" id="1.10.443.10">
    <property type="entry name" value="Intergrase catalytic core"/>
    <property type="match status" value="1"/>
</dbReference>
<dbReference type="HAMAP" id="MF_01808">
    <property type="entry name" value="Recomb_XerC_XerD"/>
    <property type="match status" value="1"/>
</dbReference>
<dbReference type="HAMAP" id="MF_01807">
    <property type="entry name" value="Recomb_XerD"/>
    <property type="match status" value="1"/>
</dbReference>
<dbReference type="InterPro" id="IPR044068">
    <property type="entry name" value="CB"/>
</dbReference>
<dbReference type="InterPro" id="IPR011010">
    <property type="entry name" value="DNA_brk_join_enz"/>
</dbReference>
<dbReference type="InterPro" id="IPR013762">
    <property type="entry name" value="Integrase-like_cat_sf"/>
</dbReference>
<dbReference type="InterPro" id="IPR002104">
    <property type="entry name" value="Integrase_catalytic"/>
</dbReference>
<dbReference type="InterPro" id="IPR010998">
    <property type="entry name" value="Integrase_recombinase_N"/>
</dbReference>
<dbReference type="InterPro" id="IPR004107">
    <property type="entry name" value="Integrase_SAM-like_N"/>
</dbReference>
<dbReference type="InterPro" id="IPR011932">
    <property type="entry name" value="Recomb_XerD"/>
</dbReference>
<dbReference type="InterPro" id="IPR023009">
    <property type="entry name" value="Tyrosine_recombinase_XerC/XerD"/>
</dbReference>
<dbReference type="InterPro" id="IPR050090">
    <property type="entry name" value="Tyrosine_recombinase_XerCD"/>
</dbReference>
<dbReference type="NCBIfam" id="NF001399">
    <property type="entry name" value="PRK00283.1"/>
    <property type="match status" value="1"/>
</dbReference>
<dbReference type="NCBIfam" id="NF040815">
    <property type="entry name" value="recomb_XerA_Arch"/>
    <property type="match status" value="1"/>
</dbReference>
<dbReference type="NCBIfam" id="TIGR02225">
    <property type="entry name" value="recomb_XerD"/>
    <property type="match status" value="1"/>
</dbReference>
<dbReference type="PANTHER" id="PTHR30349">
    <property type="entry name" value="PHAGE INTEGRASE-RELATED"/>
    <property type="match status" value="1"/>
</dbReference>
<dbReference type="PANTHER" id="PTHR30349:SF90">
    <property type="entry name" value="TYROSINE RECOMBINASE XERD"/>
    <property type="match status" value="1"/>
</dbReference>
<dbReference type="Pfam" id="PF02899">
    <property type="entry name" value="Phage_int_SAM_1"/>
    <property type="match status" value="1"/>
</dbReference>
<dbReference type="Pfam" id="PF00589">
    <property type="entry name" value="Phage_integrase"/>
    <property type="match status" value="1"/>
</dbReference>
<dbReference type="SUPFAM" id="SSF56349">
    <property type="entry name" value="DNA breaking-rejoining enzymes"/>
    <property type="match status" value="1"/>
</dbReference>
<dbReference type="PROSITE" id="PS51900">
    <property type="entry name" value="CB"/>
    <property type="match status" value="1"/>
</dbReference>
<dbReference type="PROSITE" id="PS51898">
    <property type="entry name" value="TYR_RECOMBINASE"/>
    <property type="match status" value="1"/>
</dbReference>
<accession>O31206</accession>
<gene>
    <name evidence="1" type="primary">xerD</name>
</gene>
<name>XERD_PROMI</name>
<organism>
    <name type="scientific">Proteus mirabilis</name>
    <dbReference type="NCBI Taxonomy" id="584"/>
    <lineage>
        <taxon>Bacteria</taxon>
        <taxon>Pseudomonadati</taxon>
        <taxon>Pseudomonadota</taxon>
        <taxon>Gammaproteobacteria</taxon>
        <taxon>Enterobacterales</taxon>
        <taxon>Morganellaceae</taxon>
        <taxon>Proteus</taxon>
    </lineage>
</organism>
<reference key="1">
    <citation type="journal article" date="1998" name="FEMS Microbiol. Lett.">
        <title>Cloning and characterisation of the Proteus mirabilis xerD gene.</title>
        <authorList>
            <person name="Villion M."/>
            <person name="Szatmari G."/>
        </authorList>
    </citation>
    <scope>NUCLEOTIDE SEQUENCE [GENOMIC DNA]</scope>
    <scope>DNA-BINDING</scope>
    <source>
        <strain>UM-240-82</strain>
    </source>
</reference>
<keyword id="KW-0131">Cell cycle</keyword>
<keyword id="KW-0132">Cell division</keyword>
<keyword id="KW-0159">Chromosome partition</keyword>
<keyword id="KW-0963">Cytoplasm</keyword>
<keyword id="KW-0229">DNA integration</keyword>
<keyword id="KW-0233">DNA recombination</keyword>
<keyword id="KW-0238">DNA-binding</keyword>
<sequence length="313" mass="35760">MTQTKLSTQTTTDNNQEDNDVIIEQFLDSIWLEQGLSANTLSAYRLDLQALSQWLVTQKLNWLSVTTLDLHAFLATRLDEGYKATSAARLLSTLRRFFQYLYREKLRQDDPSALLSTPKLPKRLPKDLSEQQVENLLSAPCIDEPIELRDKAMLEVLYACGLRVSELVGLSLSDISLRQGVLRVIGKGDKERLVPLGEEAIYWLEQYLQYGRPALMQGKTDDIVFPSLRGQKMTRQTFWHRIKHYAVIAGIDSEKLSPHVLRHAFATHLLNHGADLRVVQMLLGHSDLSTTQIYTHVATERLKVLHQQHHPRG</sequence>